<feature type="signal peptide" evidence="1">
    <location>
        <begin position="1"/>
        <end position="23"/>
    </location>
</feature>
<feature type="chain" id="PRO_0000032937" description="Prolactin">
    <location>
        <begin position="24"/>
        <end position="210"/>
    </location>
</feature>
<feature type="disulfide bond" evidence="1">
    <location>
        <begin position="69"/>
        <end position="183"/>
    </location>
</feature>
<feature type="disulfide bond" evidence="1">
    <location>
        <begin position="200"/>
        <end position="210"/>
    </location>
</feature>
<sequence>MAEGSRLYFAVTVLMCAFVSINGVGLNDLLERASQLSDKLHSLSTSLTNDLDSHFPPVGRVMMPRPSMCHTSSLQIPNDKDQALKVPEDELLSLARSLLLAWSDPLALLSSEASSLAHPERNTINSKTKELQDNINSLGAGLERVVHKMGSSSDNLSSLPFYSNSLGQDKTSRLVNFHFLLSCFRRDSHKIDSFLKVLRCRAAKKRPEMC</sequence>
<keyword id="KW-1015">Disulfide bond</keyword>
<keyword id="KW-0372">Hormone</keyword>
<keyword id="KW-0964">Secreted</keyword>
<keyword id="KW-0732">Signal</keyword>
<organism>
    <name type="scientific">Hypophthalmichthys nobilis</name>
    <name type="common">Bighead carp</name>
    <name type="synonym">Aristichthys nobilis</name>
    <dbReference type="NCBI Taxonomy" id="7965"/>
    <lineage>
        <taxon>Eukaryota</taxon>
        <taxon>Metazoa</taxon>
        <taxon>Chordata</taxon>
        <taxon>Craniata</taxon>
        <taxon>Vertebrata</taxon>
        <taxon>Euteleostomi</taxon>
        <taxon>Actinopterygii</taxon>
        <taxon>Neopterygii</taxon>
        <taxon>Teleostei</taxon>
        <taxon>Ostariophysi</taxon>
        <taxon>Cypriniformes</taxon>
        <taxon>Xenocyprididae</taxon>
        <taxon>Xenocypridinae</taxon>
        <taxon>Hypophthalmichthys</taxon>
    </lineage>
</organism>
<comment type="subcellular location">
    <subcellularLocation>
        <location>Secreted</location>
    </subcellularLocation>
</comment>
<comment type="tissue specificity">
    <text>Pituitary gland.</text>
</comment>
<comment type="similarity">
    <text evidence="2">Belongs to the somatotropin/prolactin family.</text>
</comment>
<dbReference type="EMBL" id="X61049">
    <property type="protein sequence ID" value="CAA43383.1"/>
    <property type="molecule type" value="mRNA"/>
</dbReference>
<dbReference type="PIR" id="S16765">
    <property type="entry name" value="S16765"/>
</dbReference>
<dbReference type="SMR" id="P29235"/>
<dbReference type="GO" id="GO:0005615">
    <property type="term" value="C:extracellular space"/>
    <property type="evidence" value="ECO:0007669"/>
    <property type="project" value="TreeGrafter"/>
</dbReference>
<dbReference type="GO" id="GO:0005179">
    <property type="term" value="F:hormone activity"/>
    <property type="evidence" value="ECO:0007669"/>
    <property type="project" value="UniProtKB-KW"/>
</dbReference>
<dbReference type="GO" id="GO:0008284">
    <property type="term" value="P:positive regulation of cell population proliferation"/>
    <property type="evidence" value="ECO:0007669"/>
    <property type="project" value="TreeGrafter"/>
</dbReference>
<dbReference type="GO" id="GO:0046427">
    <property type="term" value="P:positive regulation of receptor signaling pathway via JAK-STAT"/>
    <property type="evidence" value="ECO:0007669"/>
    <property type="project" value="TreeGrafter"/>
</dbReference>
<dbReference type="GO" id="GO:0031667">
    <property type="term" value="P:response to nutrient levels"/>
    <property type="evidence" value="ECO:0007669"/>
    <property type="project" value="TreeGrafter"/>
</dbReference>
<dbReference type="FunFam" id="1.20.1250.10:FF:000037">
    <property type="entry name" value="Prolactin"/>
    <property type="match status" value="1"/>
</dbReference>
<dbReference type="Gene3D" id="1.20.1250.10">
    <property type="match status" value="1"/>
</dbReference>
<dbReference type="InterPro" id="IPR009079">
    <property type="entry name" value="4_helix_cytokine-like_core"/>
</dbReference>
<dbReference type="InterPro" id="IPR001400">
    <property type="entry name" value="Somatotropin/Prolactin"/>
</dbReference>
<dbReference type="InterPro" id="IPR018116">
    <property type="entry name" value="Somatotropin_CS"/>
</dbReference>
<dbReference type="PANTHER" id="PTHR11417:SF5">
    <property type="entry name" value="PROLACTIN"/>
    <property type="match status" value="1"/>
</dbReference>
<dbReference type="PANTHER" id="PTHR11417">
    <property type="entry name" value="SOMATOTROPIN,PROLACTIN"/>
    <property type="match status" value="1"/>
</dbReference>
<dbReference type="Pfam" id="PF00103">
    <property type="entry name" value="Hormone_1"/>
    <property type="match status" value="1"/>
</dbReference>
<dbReference type="PRINTS" id="PR00836">
    <property type="entry name" value="SOMATOTROPIN"/>
</dbReference>
<dbReference type="SUPFAM" id="SSF47266">
    <property type="entry name" value="4-helical cytokines"/>
    <property type="match status" value="1"/>
</dbReference>
<dbReference type="PROSITE" id="PS00266">
    <property type="entry name" value="SOMATOTROPIN_1"/>
    <property type="match status" value="1"/>
</dbReference>
<dbReference type="PROSITE" id="PS00338">
    <property type="entry name" value="SOMATOTROPIN_2"/>
    <property type="match status" value="1"/>
</dbReference>
<proteinExistence type="evidence at transcript level"/>
<gene>
    <name type="primary">prl</name>
</gene>
<accession>P29235</accession>
<evidence type="ECO:0000250" key="1"/>
<evidence type="ECO:0000305" key="2"/>
<name>PRL_HYPNO</name>
<reference key="1">
    <citation type="journal article" date="1992" name="Gen. Comp. Endocrinol.">
        <title>Molecular cloning of silver carp and bighead carp prolactin.</title>
        <authorList>
            <person name="Chang Y.S."/>
            <person name="Huang F.-L."/>
            <person name="Lo T.B."/>
        </authorList>
    </citation>
    <scope>NUCLEOTIDE SEQUENCE [MRNA]</scope>
    <source>
        <tissue>Pituitary</tissue>
    </source>
</reference>
<protein>
    <recommendedName>
        <fullName>Prolactin</fullName>
        <shortName>PRL</shortName>
    </recommendedName>
</protein>